<comment type="similarity">
    <text evidence="1">Belongs to the universal ribosomal protein uS9 family.</text>
</comment>
<sequence>MTKLKIKTDKPLTTAVLTSKKLTVKAPREKIDSASKFYATGKRKNAIARVWLKVGKGKIVVNKKTIDQYFSSETYVKTILQPFVLTKTIDQYDVICTVRGGGISGQKGAILHGISKALDKSAPDFHAMLRKGGLLTRDSRVVERKKYGQRKARKKTQFSKR</sequence>
<reference key="1">
    <citation type="submission" date="2007-09" db="EMBL/GenBank/DDBJ databases">
        <title>Complete genome sequence of Rickettsia canadensis.</title>
        <authorList>
            <person name="Madan A."/>
            <person name="Fahey J."/>
            <person name="Helton E."/>
            <person name="Ketteman M."/>
            <person name="Madan A."/>
            <person name="Rodrigues S."/>
            <person name="Sanchez A."/>
            <person name="Whiting M."/>
            <person name="Dasch G."/>
            <person name="Eremeeva M."/>
        </authorList>
    </citation>
    <scope>NUCLEOTIDE SEQUENCE [LARGE SCALE GENOMIC DNA]</scope>
    <source>
        <strain>McKiel</strain>
    </source>
</reference>
<dbReference type="EMBL" id="CP000409">
    <property type="protein sequence ID" value="ABV73215.1"/>
    <property type="molecule type" value="Genomic_DNA"/>
</dbReference>
<dbReference type="RefSeq" id="WP_012148414.1">
    <property type="nucleotide sequence ID" value="NC_009879.1"/>
</dbReference>
<dbReference type="SMR" id="A8EXY2"/>
<dbReference type="STRING" id="293613.A1E_01350"/>
<dbReference type="KEGG" id="rcm:A1E_01350"/>
<dbReference type="eggNOG" id="COG0103">
    <property type="taxonomic scope" value="Bacteria"/>
</dbReference>
<dbReference type="HOGENOM" id="CLU_046483_2_0_5"/>
<dbReference type="Proteomes" id="UP000007056">
    <property type="component" value="Chromosome"/>
</dbReference>
<dbReference type="GO" id="GO:0022627">
    <property type="term" value="C:cytosolic small ribosomal subunit"/>
    <property type="evidence" value="ECO:0007669"/>
    <property type="project" value="TreeGrafter"/>
</dbReference>
<dbReference type="GO" id="GO:0003723">
    <property type="term" value="F:RNA binding"/>
    <property type="evidence" value="ECO:0007669"/>
    <property type="project" value="TreeGrafter"/>
</dbReference>
<dbReference type="GO" id="GO:0003735">
    <property type="term" value="F:structural constituent of ribosome"/>
    <property type="evidence" value="ECO:0007669"/>
    <property type="project" value="InterPro"/>
</dbReference>
<dbReference type="GO" id="GO:0006412">
    <property type="term" value="P:translation"/>
    <property type="evidence" value="ECO:0007669"/>
    <property type="project" value="UniProtKB-UniRule"/>
</dbReference>
<dbReference type="FunFam" id="3.30.230.10:FF:000001">
    <property type="entry name" value="30S ribosomal protein S9"/>
    <property type="match status" value="1"/>
</dbReference>
<dbReference type="Gene3D" id="3.30.230.10">
    <property type="match status" value="1"/>
</dbReference>
<dbReference type="HAMAP" id="MF_00532_B">
    <property type="entry name" value="Ribosomal_uS9_B"/>
    <property type="match status" value="1"/>
</dbReference>
<dbReference type="InterPro" id="IPR020568">
    <property type="entry name" value="Ribosomal_Su5_D2-typ_SF"/>
</dbReference>
<dbReference type="InterPro" id="IPR000754">
    <property type="entry name" value="Ribosomal_uS9"/>
</dbReference>
<dbReference type="InterPro" id="IPR023035">
    <property type="entry name" value="Ribosomal_uS9_bac/plastid"/>
</dbReference>
<dbReference type="InterPro" id="IPR020574">
    <property type="entry name" value="Ribosomal_uS9_CS"/>
</dbReference>
<dbReference type="InterPro" id="IPR014721">
    <property type="entry name" value="Ribsml_uS5_D2-typ_fold_subgr"/>
</dbReference>
<dbReference type="NCBIfam" id="NF001099">
    <property type="entry name" value="PRK00132.1"/>
    <property type="match status" value="1"/>
</dbReference>
<dbReference type="PANTHER" id="PTHR21569">
    <property type="entry name" value="RIBOSOMAL PROTEIN S9"/>
    <property type="match status" value="1"/>
</dbReference>
<dbReference type="PANTHER" id="PTHR21569:SF1">
    <property type="entry name" value="SMALL RIBOSOMAL SUBUNIT PROTEIN US9M"/>
    <property type="match status" value="1"/>
</dbReference>
<dbReference type="Pfam" id="PF00380">
    <property type="entry name" value="Ribosomal_S9"/>
    <property type="match status" value="1"/>
</dbReference>
<dbReference type="SUPFAM" id="SSF54211">
    <property type="entry name" value="Ribosomal protein S5 domain 2-like"/>
    <property type="match status" value="1"/>
</dbReference>
<dbReference type="PROSITE" id="PS00360">
    <property type="entry name" value="RIBOSOMAL_S9"/>
    <property type="match status" value="1"/>
</dbReference>
<evidence type="ECO:0000255" key="1">
    <source>
        <dbReference type="HAMAP-Rule" id="MF_00532"/>
    </source>
</evidence>
<evidence type="ECO:0000305" key="2"/>
<gene>
    <name evidence="1" type="primary">rpsI</name>
    <name type="ordered locus">A1E_01350</name>
</gene>
<accession>A8EXY2</accession>
<feature type="chain" id="PRO_1000051311" description="Small ribosomal subunit protein uS9">
    <location>
        <begin position="1"/>
        <end position="161"/>
    </location>
</feature>
<keyword id="KW-0687">Ribonucleoprotein</keyword>
<keyword id="KW-0689">Ribosomal protein</keyword>
<organism>
    <name type="scientific">Rickettsia canadensis (strain McKiel)</name>
    <dbReference type="NCBI Taxonomy" id="293613"/>
    <lineage>
        <taxon>Bacteria</taxon>
        <taxon>Pseudomonadati</taxon>
        <taxon>Pseudomonadota</taxon>
        <taxon>Alphaproteobacteria</taxon>
        <taxon>Rickettsiales</taxon>
        <taxon>Rickettsiaceae</taxon>
        <taxon>Rickettsieae</taxon>
        <taxon>Rickettsia</taxon>
        <taxon>belli group</taxon>
    </lineage>
</organism>
<name>RS9_RICCK</name>
<proteinExistence type="inferred from homology"/>
<protein>
    <recommendedName>
        <fullName evidence="1">Small ribosomal subunit protein uS9</fullName>
    </recommendedName>
    <alternativeName>
        <fullName evidence="2">30S ribosomal protein S9</fullName>
    </alternativeName>
</protein>